<keyword id="KW-0963">Cytoplasm</keyword>
<keyword id="KW-0536">Nodulation</keyword>
<keyword id="KW-0614">Plasmid</keyword>
<keyword id="KW-1185">Reference proteome</keyword>
<keyword id="KW-0808">Transferase</keyword>
<name>NOLO_SINFN</name>
<gene>
    <name type="primary">nolO</name>
    <name type="ordered locus">NGR_a03460</name>
    <name type="ORF">y4hD</name>
</gene>
<accession>P55474</accession>
<evidence type="ECO:0000305" key="1"/>
<geneLocation type="plasmid">
    <name>sym pNGR234a</name>
</geneLocation>
<protein>
    <recommendedName>
        <fullName>Nodulation protein NolNO</fullName>
        <ecNumber>2.1.3.-</ecNumber>
    </recommendedName>
</protein>
<proteinExistence type="inferred from homology"/>
<comment type="function">
    <text>Involved in the O-carbamoylation of nod factors.</text>
</comment>
<comment type="subcellular location">
    <subcellularLocation>
        <location evidence="1">Cytoplasm</location>
    </subcellularLocation>
</comment>
<comment type="similarity">
    <text evidence="1">Belongs to the NodU/CmcH family.</text>
</comment>
<feature type="chain" id="PRO_0000207853" description="Nodulation protein NolNO">
    <location>
        <begin position="1"/>
        <end position="680"/>
    </location>
</feature>
<organism>
    <name type="scientific">Sinorhizobium fredii (strain NBRC 101917 / NGR234)</name>
    <dbReference type="NCBI Taxonomy" id="394"/>
    <lineage>
        <taxon>Bacteria</taxon>
        <taxon>Pseudomonadati</taxon>
        <taxon>Pseudomonadota</taxon>
        <taxon>Alphaproteobacteria</taxon>
        <taxon>Hyphomicrobiales</taxon>
        <taxon>Rhizobiaceae</taxon>
        <taxon>Sinorhizobium/Ensifer group</taxon>
        <taxon>Sinorhizobium</taxon>
    </lineage>
</organism>
<reference key="1">
    <citation type="journal article" date="1997" name="Nature">
        <title>Molecular basis of symbiosis between Rhizobium and legumes.</title>
        <authorList>
            <person name="Freiberg C.A."/>
            <person name="Fellay R."/>
            <person name="Bairoch A."/>
            <person name="Broughton W.J."/>
            <person name="Rosenthal A."/>
            <person name="Perret X."/>
        </authorList>
    </citation>
    <scope>NUCLEOTIDE SEQUENCE [LARGE SCALE GENOMIC DNA]</scope>
    <source>
        <strain>NBRC 101917 / NGR234</strain>
    </source>
</reference>
<reference key="2">
    <citation type="journal article" date="2009" name="Appl. Environ. Microbiol.">
        <title>Rhizobium sp. strain NGR234 possesses a remarkable number of secretion systems.</title>
        <authorList>
            <person name="Schmeisser C."/>
            <person name="Liesegang H."/>
            <person name="Krysciak D."/>
            <person name="Bakkou N."/>
            <person name="Le Quere A."/>
            <person name="Wollherr A."/>
            <person name="Heinemeyer I."/>
            <person name="Morgenstern B."/>
            <person name="Pommerening-Roeser A."/>
            <person name="Flores M."/>
            <person name="Palacios R."/>
            <person name="Brenner S."/>
            <person name="Gottschalk G."/>
            <person name="Schmitz R.A."/>
            <person name="Broughton W.J."/>
            <person name="Perret X."/>
            <person name="Strittmatter A.W."/>
            <person name="Streit W.R."/>
        </authorList>
    </citation>
    <scope>NUCLEOTIDE SEQUENCE [LARGE SCALE GENOMIC DNA]</scope>
    <source>
        <strain>NBRC 101917 / NGR234</strain>
    </source>
</reference>
<dbReference type="EC" id="2.1.3.-"/>
<dbReference type="EMBL" id="U00090">
    <property type="protein sequence ID" value="AAB91692.1"/>
    <property type="molecule type" value="Genomic_DNA"/>
</dbReference>
<dbReference type="RefSeq" id="NP_443880.1">
    <property type="nucleotide sequence ID" value="NC_000914.2"/>
</dbReference>
<dbReference type="RefSeq" id="WP_010875360.1">
    <property type="nucleotide sequence ID" value="NC_000914.2"/>
</dbReference>
<dbReference type="SMR" id="P55474"/>
<dbReference type="KEGG" id="rhi:NGR_a03460"/>
<dbReference type="PATRIC" id="fig|394.7.peg.355"/>
<dbReference type="eggNOG" id="COG2192">
    <property type="taxonomic scope" value="Bacteria"/>
</dbReference>
<dbReference type="HOGENOM" id="CLU_014411_2_0_5"/>
<dbReference type="OrthoDB" id="9780777at2"/>
<dbReference type="Proteomes" id="UP000001054">
    <property type="component" value="Plasmid pNGR234a"/>
</dbReference>
<dbReference type="GO" id="GO:0005737">
    <property type="term" value="C:cytoplasm"/>
    <property type="evidence" value="ECO:0007669"/>
    <property type="project" value="UniProtKB-SubCell"/>
</dbReference>
<dbReference type="GO" id="GO:0016740">
    <property type="term" value="F:transferase activity"/>
    <property type="evidence" value="ECO:0007669"/>
    <property type="project" value="UniProtKB-KW"/>
</dbReference>
<dbReference type="GO" id="GO:0009058">
    <property type="term" value="P:biosynthetic process"/>
    <property type="evidence" value="ECO:0007669"/>
    <property type="project" value="InterPro"/>
</dbReference>
<dbReference type="CDD" id="cd24099">
    <property type="entry name" value="ASKHA_NBD_NovN-like_N"/>
    <property type="match status" value="1"/>
</dbReference>
<dbReference type="Gene3D" id="3.30.420.40">
    <property type="match status" value="2"/>
</dbReference>
<dbReference type="Gene3D" id="3.90.870.20">
    <property type="entry name" value="Carbamoyltransferase, C-terminal domain"/>
    <property type="match status" value="1"/>
</dbReference>
<dbReference type="InterPro" id="IPR043129">
    <property type="entry name" value="ATPase_NBD"/>
</dbReference>
<dbReference type="InterPro" id="IPR031730">
    <property type="entry name" value="Carbam_trans_C"/>
</dbReference>
<dbReference type="InterPro" id="IPR038152">
    <property type="entry name" value="Carbam_trans_C_sf"/>
</dbReference>
<dbReference type="InterPro" id="IPR003696">
    <property type="entry name" value="Carbtransf_dom"/>
</dbReference>
<dbReference type="InterPro" id="IPR051338">
    <property type="entry name" value="NodU/CmcH_Carbamoyltrnsfr"/>
</dbReference>
<dbReference type="PANTHER" id="PTHR34847">
    <property type="entry name" value="NODULATION PROTEIN U"/>
    <property type="match status" value="1"/>
</dbReference>
<dbReference type="PANTHER" id="PTHR34847:SF1">
    <property type="entry name" value="NODULATION PROTEIN U"/>
    <property type="match status" value="1"/>
</dbReference>
<dbReference type="Pfam" id="PF16861">
    <property type="entry name" value="Carbam_trans_C"/>
    <property type="match status" value="1"/>
</dbReference>
<dbReference type="Pfam" id="PF02543">
    <property type="entry name" value="Carbam_trans_N"/>
    <property type="match status" value="1"/>
</dbReference>
<dbReference type="SUPFAM" id="SSF53067">
    <property type="entry name" value="Actin-like ATPase domain"/>
    <property type="match status" value="1"/>
</dbReference>
<sequence>MLCLGLSGGLSKIHENSLDLPNTFMHDGAAVLVRDGQVIAAVEEERLNRIKHSNKLPRRSIQYCLEYAGVQLSDIDCIAYYATEAFCNAMLERLLVSQSHMSIPLDAKLLLRGLLAQEFGTEVDPSRISFVSHHLSHAWSAFSMSGFEQSLILTIDGGGDFASGLLAVGSGTEVKPLATFPESDSLGLLYLETIKYLGYGMFDEYKVMGLAPYGDPAPHRDLFEQFYELLDNGGYRIYLDRIGPTLLRSIEVRRKGMPFTQQHKDLSASLQEALERIVFHVLRHHSEITGIKRLSLAGGVAHNCTLNGKLLRSGIFQDIFVQPAAHDAGCALGAALMMSNELGQSAPRERLQEVYWGPDLGSDRAVEQELIAWGGHIEIERCDDVASRAAEWIADGAVIGWVQGRSEFGPRALGNRSILADPRPATNKDRINAIVKKREGYRPFAPSVLEEDANEFFELPDSRQEFPFMNFVVPVRESKRNLLGAVTHVDGTARLQTVSRNINQAYWEVINAFRKRTGVPILLNTSFNNNVEPIVDSVADAVTTFLTTDLDGLVVGSYLIKKRTASPEDWSRLALSLPPYSSLHQVRAFTALDRQETVCEIRTGPSSREAVRISSELFELLMRIDGEAPLGDILDLIAPNQNQREALLNELRGLWEQRSVRLHPMRADSAAEPLSSPINL</sequence>